<dbReference type="EC" id="2.4.2.9" evidence="1"/>
<dbReference type="EMBL" id="CP000114">
    <property type="protein sequence ID" value="ABA45426.1"/>
    <property type="molecule type" value="Genomic_DNA"/>
</dbReference>
<dbReference type="RefSeq" id="WP_000823056.1">
    <property type="nucleotide sequence ID" value="NC_007432.1"/>
</dbReference>
<dbReference type="SMR" id="Q3K0E8"/>
<dbReference type="GeneID" id="66886230"/>
<dbReference type="KEGG" id="sak:SAK_1397"/>
<dbReference type="HOGENOM" id="CLU_094234_2_1_9"/>
<dbReference type="GO" id="GO:0003723">
    <property type="term" value="F:RNA binding"/>
    <property type="evidence" value="ECO:0007669"/>
    <property type="project" value="UniProtKB-UniRule"/>
</dbReference>
<dbReference type="GO" id="GO:0004845">
    <property type="term" value="F:uracil phosphoribosyltransferase activity"/>
    <property type="evidence" value="ECO:0007669"/>
    <property type="project" value="UniProtKB-UniRule"/>
</dbReference>
<dbReference type="GO" id="GO:0006353">
    <property type="term" value="P:DNA-templated transcription termination"/>
    <property type="evidence" value="ECO:0007669"/>
    <property type="project" value="UniProtKB-UniRule"/>
</dbReference>
<dbReference type="CDD" id="cd06223">
    <property type="entry name" value="PRTases_typeI"/>
    <property type="match status" value="1"/>
</dbReference>
<dbReference type="FunFam" id="3.40.50.2020:FF:000020">
    <property type="entry name" value="Bifunctional protein PyrR"/>
    <property type="match status" value="1"/>
</dbReference>
<dbReference type="Gene3D" id="3.40.50.2020">
    <property type="match status" value="1"/>
</dbReference>
<dbReference type="HAMAP" id="MF_01219">
    <property type="entry name" value="PyrR"/>
    <property type="match status" value="1"/>
</dbReference>
<dbReference type="InterPro" id="IPR000836">
    <property type="entry name" value="PRibTrfase_dom"/>
</dbReference>
<dbReference type="InterPro" id="IPR029057">
    <property type="entry name" value="PRTase-like"/>
</dbReference>
<dbReference type="InterPro" id="IPR023050">
    <property type="entry name" value="PyrR"/>
</dbReference>
<dbReference type="InterPro" id="IPR050137">
    <property type="entry name" value="PyrR_bifunctional"/>
</dbReference>
<dbReference type="NCBIfam" id="NF003548">
    <property type="entry name" value="PRK05205.1-4"/>
    <property type="match status" value="1"/>
</dbReference>
<dbReference type="NCBIfam" id="NF003549">
    <property type="entry name" value="PRK05205.1-5"/>
    <property type="match status" value="1"/>
</dbReference>
<dbReference type="PANTHER" id="PTHR11608">
    <property type="entry name" value="BIFUNCTIONAL PROTEIN PYRR"/>
    <property type="match status" value="1"/>
</dbReference>
<dbReference type="PANTHER" id="PTHR11608:SF0">
    <property type="entry name" value="BIFUNCTIONAL PROTEIN PYRR"/>
    <property type="match status" value="1"/>
</dbReference>
<dbReference type="Pfam" id="PF00156">
    <property type="entry name" value="Pribosyltran"/>
    <property type="match status" value="1"/>
</dbReference>
<dbReference type="SUPFAM" id="SSF53271">
    <property type="entry name" value="PRTase-like"/>
    <property type="match status" value="1"/>
</dbReference>
<reference key="1">
    <citation type="journal article" date="2005" name="Proc. Natl. Acad. Sci. U.S.A.">
        <title>Genome analysis of multiple pathogenic isolates of Streptococcus agalactiae: implications for the microbial 'pan-genome'.</title>
        <authorList>
            <person name="Tettelin H."/>
            <person name="Masignani V."/>
            <person name="Cieslewicz M.J."/>
            <person name="Donati C."/>
            <person name="Medini D."/>
            <person name="Ward N.L."/>
            <person name="Angiuoli S.V."/>
            <person name="Crabtree J."/>
            <person name="Jones A.L."/>
            <person name="Durkin A.S."/>
            <person name="DeBoy R.T."/>
            <person name="Davidsen T.M."/>
            <person name="Mora M."/>
            <person name="Scarselli M."/>
            <person name="Margarit y Ros I."/>
            <person name="Peterson J.D."/>
            <person name="Hauser C.R."/>
            <person name="Sundaram J.P."/>
            <person name="Nelson W.C."/>
            <person name="Madupu R."/>
            <person name="Brinkac L.M."/>
            <person name="Dodson R.J."/>
            <person name="Rosovitz M.J."/>
            <person name="Sullivan S.A."/>
            <person name="Daugherty S.C."/>
            <person name="Haft D.H."/>
            <person name="Selengut J."/>
            <person name="Gwinn M.L."/>
            <person name="Zhou L."/>
            <person name="Zafar N."/>
            <person name="Khouri H."/>
            <person name="Radune D."/>
            <person name="Dimitrov G."/>
            <person name="Watkins K."/>
            <person name="O'Connor K.J."/>
            <person name="Smith S."/>
            <person name="Utterback T.R."/>
            <person name="White O."/>
            <person name="Rubens C.E."/>
            <person name="Grandi G."/>
            <person name="Madoff L.C."/>
            <person name="Kasper D.L."/>
            <person name="Telford J.L."/>
            <person name="Wessels M.R."/>
            <person name="Rappuoli R."/>
            <person name="Fraser C.M."/>
        </authorList>
    </citation>
    <scope>NUCLEOTIDE SEQUENCE [LARGE SCALE GENOMIC DNA]</scope>
    <source>
        <strain>ATCC 27591 / A909 / CDC SS700</strain>
    </source>
</reference>
<accession>Q3K0E8</accession>
<feature type="chain" id="PRO_1000053865" description="Bifunctional protein PyrR">
    <location>
        <begin position="1"/>
        <end position="173"/>
    </location>
</feature>
<feature type="short sequence motif" description="PRPP-binding" evidence="1">
    <location>
        <begin position="93"/>
        <end position="105"/>
    </location>
</feature>
<keyword id="KW-0328">Glycosyltransferase</keyword>
<keyword id="KW-0694">RNA-binding</keyword>
<keyword id="KW-0804">Transcription</keyword>
<keyword id="KW-0805">Transcription regulation</keyword>
<keyword id="KW-0806">Transcription termination</keyword>
<keyword id="KW-0808">Transferase</keyword>
<organism>
    <name type="scientific">Streptococcus agalactiae serotype Ia (strain ATCC 27591 / A909 / CDC SS700)</name>
    <dbReference type="NCBI Taxonomy" id="205921"/>
    <lineage>
        <taxon>Bacteria</taxon>
        <taxon>Bacillati</taxon>
        <taxon>Bacillota</taxon>
        <taxon>Bacilli</taxon>
        <taxon>Lactobacillales</taxon>
        <taxon>Streptococcaceae</taxon>
        <taxon>Streptococcus</taxon>
    </lineage>
</organism>
<sequence>MKRKEIIDDVTMKRAITRITYEIIERNKNLDNIVLAGIKTRGVFLAKRIQERLKQLENLDIPVGELDTKPFRDDMKVEVDTTTMPVDITDKDIILIDDVLYTGRTIRAAIDNLVSLGRPSRVSLAVLIDRGHRELPIRADYVGKNIPTSQFEEILVEVMEHDGYDRVSIIDPS</sequence>
<evidence type="ECO:0000255" key="1">
    <source>
        <dbReference type="HAMAP-Rule" id="MF_01219"/>
    </source>
</evidence>
<proteinExistence type="inferred from homology"/>
<comment type="function">
    <text evidence="1">Regulates transcriptional attenuation of the pyrimidine nucleotide (pyr) operon by binding in a uridine-dependent manner to specific sites on pyr mRNA. This disrupts an antiterminator hairpin in the RNA and favors formation of a downstream transcription terminator, leading to a reduced expression of downstream genes.</text>
</comment>
<comment type="function">
    <text evidence="1">Also displays a weak uracil phosphoribosyltransferase activity which is not physiologically significant.</text>
</comment>
<comment type="catalytic activity">
    <reaction evidence="1">
        <text>UMP + diphosphate = 5-phospho-alpha-D-ribose 1-diphosphate + uracil</text>
        <dbReference type="Rhea" id="RHEA:13017"/>
        <dbReference type="ChEBI" id="CHEBI:17568"/>
        <dbReference type="ChEBI" id="CHEBI:33019"/>
        <dbReference type="ChEBI" id="CHEBI:57865"/>
        <dbReference type="ChEBI" id="CHEBI:58017"/>
        <dbReference type="EC" id="2.4.2.9"/>
    </reaction>
</comment>
<comment type="subunit">
    <text evidence="1">Homodimer and homohexamer; in equilibrium.</text>
</comment>
<comment type="similarity">
    <text evidence="1">Belongs to the purine/pyrimidine phosphoribosyltransferase family. PyrR subfamily.</text>
</comment>
<name>PYRR_STRA1</name>
<protein>
    <recommendedName>
        <fullName evidence="1">Bifunctional protein PyrR</fullName>
    </recommendedName>
    <domain>
        <recommendedName>
            <fullName evidence="1">Pyrimidine operon regulatory protein</fullName>
        </recommendedName>
    </domain>
    <domain>
        <recommendedName>
            <fullName evidence="1">Uracil phosphoribosyltransferase</fullName>
            <shortName evidence="1">UPRTase</shortName>
            <ecNumber evidence="1">2.4.2.9</ecNumber>
        </recommendedName>
    </domain>
</protein>
<gene>
    <name evidence="1" type="primary">pyrR</name>
    <name type="ordered locus">SAK_1397</name>
</gene>